<name>END4_YERPP</name>
<reference key="1">
    <citation type="submission" date="2007-02" db="EMBL/GenBank/DDBJ databases">
        <title>Complete sequence of chromosome of Yersinia pestis Pestoides F.</title>
        <authorList>
            <consortium name="US DOE Joint Genome Institute"/>
            <person name="Copeland A."/>
            <person name="Lucas S."/>
            <person name="Lapidus A."/>
            <person name="Barry K."/>
            <person name="Detter J.C."/>
            <person name="Glavina del Rio T."/>
            <person name="Hammon N."/>
            <person name="Israni S."/>
            <person name="Dalin E."/>
            <person name="Tice H."/>
            <person name="Pitluck S."/>
            <person name="Di Bartolo G."/>
            <person name="Chain P."/>
            <person name="Malfatti S."/>
            <person name="Shin M."/>
            <person name="Vergez L."/>
            <person name="Schmutz J."/>
            <person name="Larimer F."/>
            <person name="Land M."/>
            <person name="Hauser L."/>
            <person name="Worsham P."/>
            <person name="Chu M."/>
            <person name="Bearden S."/>
            <person name="Garcia E."/>
            <person name="Richardson P."/>
        </authorList>
    </citation>
    <scope>NUCLEOTIDE SEQUENCE [LARGE SCALE GENOMIC DNA]</scope>
    <source>
        <strain>Pestoides F</strain>
    </source>
</reference>
<keyword id="KW-0227">DNA damage</keyword>
<keyword id="KW-0234">DNA repair</keyword>
<keyword id="KW-0255">Endonuclease</keyword>
<keyword id="KW-0378">Hydrolase</keyword>
<keyword id="KW-0479">Metal-binding</keyword>
<keyword id="KW-0540">Nuclease</keyword>
<keyword id="KW-0862">Zinc</keyword>
<accession>A4TNA4</accession>
<sequence>MKFVGAHVSAAGGVDQAVIRAHELEATAFALFTKNQRQWRAAPLAEDVIEKFKLACEKYGYTSAQILPHDSYLINLGHPVTEALEKSREAFIDELVRCQQLGLSLLNFHPGSHLLQIDEDQCLARIAESINIALDATEGVTAVIENTAGQGSNLGFKFEHLAAIIERVEDKSRVGVCIDTCHAFAAGYDLRTEEDCEHTFAALGKIVGFQYLRGMHLNDAKSEFNSRVDRHHSLGEGNIGKTVFSYIMRDSRFDNIPLILETVNMDIWAEEIAWLKSQAEIEPSL</sequence>
<organism>
    <name type="scientific">Yersinia pestis (strain Pestoides F)</name>
    <dbReference type="NCBI Taxonomy" id="386656"/>
    <lineage>
        <taxon>Bacteria</taxon>
        <taxon>Pseudomonadati</taxon>
        <taxon>Pseudomonadota</taxon>
        <taxon>Gammaproteobacteria</taxon>
        <taxon>Enterobacterales</taxon>
        <taxon>Yersiniaceae</taxon>
        <taxon>Yersinia</taxon>
    </lineage>
</organism>
<feature type="chain" id="PRO_1000011350" description="Probable endonuclease 4">
    <location>
        <begin position="1"/>
        <end position="285"/>
    </location>
</feature>
<feature type="binding site" evidence="1">
    <location>
        <position position="69"/>
    </location>
    <ligand>
        <name>Zn(2+)</name>
        <dbReference type="ChEBI" id="CHEBI:29105"/>
        <label>1</label>
    </ligand>
</feature>
<feature type="binding site" evidence="1">
    <location>
        <position position="109"/>
    </location>
    <ligand>
        <name>Zn(2+)</name>
        <dbReference type="ChEBI" id="CHEBI:29105"/>
        <label>1</label>
    </ligand>
</feature>
<feature type="binding site" evidence="1">
    <location>
        <position position="145"/>
    </location>
    <ligand>
        <name>Zn(2+)</name>
        <dbReference type="ChEBI" id="CHEBI:29105"/>
        <label>1</label>
    </ligand>
</feature>
<feature type="binding site" evidence="1">
    <location>
        <position position="145"/>
    </location>
    <ligand>
        <name>Zn(2+)</name>
        <dbReference type="ChEBI" id="CHEBI:29105"/>
        <label>2</label>
    </ligand>
</feature>
<feature type="binding site" evidence="1">
    <location>
        <position position="179"/>
    </location>
    <ligand>
        <name>Zn(2+)</name>
        <dbReference type="ChEBI" id="CHEBI:29105"/>
        <label>2</label>
    </ligand>
</feature>
<feature type="binding site" evidence="1">
    <location>
        <position position="182"/>
    </location>
    <ligand>
        <name>Zn(2+)</name>
        <dbReference type="ChEBI" id="CHEBI:29105"/>
        <label>3</label>
    </ligand>
</feature>
<feature type="binding site" evidence="1">
    <location>
        <position position="216"/>
    </location>
    <ligand>
        <name>Zn(2+)</name>
        <dbReference type="ChEBI" id="CHEBI:29105"/>
        <label>2</label>
    </ligand>
</feature>
<feature type="binding site" evidence="1">
    <location>
        <position position="229"/>
    </location>
    <ligand>
        <name>Zn(2+)</name>
        <dbReference type="ChEBI" id="CHEBI:29105"/>
        <label>3</label>
    </ligand>
</feature>
<feature type="binding site" evidence="1">
    <location>
        <position position="231"/>
    </location>
    <ligand>
        <name>Zn(2+)</name>
        <dbReference type="ChEBI" id="CHEBI:29105"/>
        <label>3</label>
    </ligand>
</feature>
<feature type="binding site" evidence="1">
    <location>
        <position position="261"/>
    </location>
    <ligand>
        <name>Zn(2+)</name>
        <dbReference type="ChEBI" id="CHEBI:29105"/>
        <label>2</label>
    </ligand>
</feature>
<evidence type="ECO:0000255" key="1">
    <source>
        <dbReference type="HAMAP-Rule" id="MF_00152"/>
    </source>
</evidence>
<comment type="function">
    <text evidence="1">Endonuclease IV plays a role in DNA repair. It cleaves phosphodiester bonds at apurinic or apyrimidinic (AP) sites, generating a 3'-hydroxyl group and a 5'-terminal sugar phosphate.</text>
</comment>
<comment type="catalytic activity">
    <reaction evidence="1">
        <text>Endonucleolytic cleavage to 5'-phosphooligonucleotide end-products.</text>
        <dbReference type="EC" id="3.1.21.2"/>
    </reaction>
</comment>
<comment type="cofactor">
    <cofactor evidence="1">
        <name>Zn(2+)</name>
        <dbReference type="ChEBI" id="CHEBI:29105"/>
    </cofactor>
    <text evidence="1">Binds 3 Zn(2+) ions.</text>
</comment>
<comment type="similarity">
    <text evidence="1">Belongs to the AP endonuclease 2 family.</text>
</comment>
<protein>
    <recommendedName>
        <fullName evidence="1">Probable endonuclease 4</fullName>
        <ecNumber evidence="1">3.1.21.2</ecNumber>
    </recommendedName>
    <alternativeName>
        <fullName evidence="1">Endodeoxyribonuclease IV</fullName>
    </alternativeName>
    <alternativeName>
        <fullName evidence="1">Endonuclease IV</fullName>
    </alternativeName>
</protein>
<gene>
    <name evidence="1" type="primary">nfo</name>
    <name type="ordered locus">YPDSF_2391</name>
</gene>
<proteinExistence type="inferred from homology"/>
<dbReference type="EC" id="3.1.21.2" evidence="1"/>
<dbReference type="EMBL" id="CP000668">
    <property type="protein sequence ID" value="ABP40766.1"/>
    <property type="molecule type" value="Genomic_DNA"/>
</dbReference>
<dbReference type="RefSeq" id="WP_002208791.1">
    <property type="nucleotide sequence ID" value="NZ_CP009715.1"/>
</dbReference>
<dbReference type="SMR" id="A4TNA4"/>
<dbReference type="GeneID" id="57977438"/>
<dbReference type="KEGG" id="ypp:YPDSF_2391"/>
<dbReference type="PATRIC" id="fig|386656.14.peg.3898"/>
<dbReference type="GO" id="GO:0008833">
    <property type="term" value="F:deoxyribonuclease IV (phage-T4-induced) activity"/>
    <property type="evidence" value="ECO:0007669"/>
    <property type="project" value="UniProtKB-UniRule"/>
</dbReference>
<dbReference type="GO" id="GO:0003677">
    <property type="term" value="F:DNA binding"/>
    <property type="evidence" value="ECO:0007669"/>
    <property type="project" value="InterPro"/>
</dbReference>
<dbReference type="GO" id="GO:0003906">
    <property type="term" value="F:DNA-(apurinic or apyrimidinic site) endonuclease activity"/>
    <property type="evidence" value="ECO:0007669"/>
    <property type="project" value="TreeGrafter"/>
</dbReference>
<dbReference type="GO" id="GO:0008081">
    <property type="term" value="F:phosphoric diester hydrolase activity"/>
    <property type="evidence" value="ECO:0007669"/>
    <property type="project" value="TreeGrafter"/>
</dbReference>
<dbReference type="GO" id="GO:0008270">
    <property type="term" value="F:zinc ion binding"/>
    <property type="evidence" value="ECO:0007669"/>
    <property type="project" value="UniProtKB-UniRule"/>
</dbReference>
<dbReference type="GO" id="GO:0006284">
    <property type="term" value="P:base-excision repair"/>
    <property type="evidence" value="ECO:0007669"/>
    <property type="project" value="TreeGrafter"/>
</dbReference>
<dbReference type="CDD" id="cd00019">
    <property type="entry name" value="AP2Ec"/>
    <property type="match status" value="1"/>
</dbReference>
<dbReference type="FunFam" id="3.20.20.150:FF:000001">
    <property type="entry name" value="Probable endonuclease 4"/>
    <property type="match status" value="1"/>
</dbReference>
<dbReference type="Gene3D" id="3.20.20.150">
    <property type="entry name" value="Divalent-metal-dependent TIM barrel enzymes"/>
    <property type="match status" value="1"/>
</dbReference>
<dbReference type="HAMAP" id="MF_00152">
    <property type="entry name" value="Nfo"/>
    <property type="match status" value="1"/>
</dbReference>
<dbReference type="InterPro" id="IPR001719">
    <property type="entry name" value="AP_endonuc_2"/>
</dbReference>
<dbReference type="InterPro" id="IPR018246">
    <property type="entry name" value="AP_endonuc_F2_Zn_BS"/>
</dbReference>
<dbReference type="InterPro" id="IPR036237">
    <property type="entry name" value="Xyl_isomerase-like_sf"/>
</dbReference>
<dbReference type="InterPro" id="IPR013022">
    <property type="entry name" value="Xyl_isomerase-like_TIM-brl"/>
</dbReference>
<dbReference type="NCBIfam" id="TIGR00587">
    <property type="entry name" value="nfo"/>
    <property type="match status" value="1"/>
</dbReference>
<dbReference type="NCBIfam" id="NF002199">
    <property type="entry name" value="PRK01060.1-4"/>
    <property type="match status" value="1"/>
</dbReference>
<dbReference type="PANTHER" id="PTHR21445:SF0">
    <property type="entry name" value="APURINIC-APYRIMIDINIC ENDONUCLEASE"/>
    <property type="match status" value="1"/>
</dbReference>
<dbReference type="PANTHER" id="PTHR21445">
    <property type="entry name" value="ENDONUCLEASE IV ENDODEOXYRIBONUCLEASE IV"/>
    <property type="match status" value="1"/>
</dbReference>
<dbReference type="Pfam" id="PF01261">
    <property type="entry name" value="AP_endonuc_2"/>
    <property type="match status" value="1"/>
</dbReference>
<dbReference type="SMART" id="SM00518">
    <property type="entry name" value="AP2Ec"/>
    <property type="match status" value="1"/>
</dbReference>
<dbReference type="SUPFAM" id="SSF51658">
    <property type="entry name" value="Xylose isomerase-like"/>
    <property type="match status" value="1"/>
</dbReference>
<dbReference type="PROSITE" id="PS00729">
    <property type="entry name" value="AP_NUCLEASE_F2_1"/>
    <property type="match status" value="1"/>
</dbReference>
<dbReference type="PROSITE" id="PS00730">
    <property type="entry name" value="AP_NUCLEASE_F2_2"/>
    <property type="match status" value="1"/>
</dbReference>
<dbReference type="PROSITE" id="PS00731">
    <property type="entry name" value="AP_NUCLEASE_F2_3"/>
    <property type="match status" value="1"/>
</dbReference>
<dbReference type="PROSITE" id="PS51432">
    <property type="entry name" value="AP_NUCLEASE_F2_4"/>
    <property type="match status" value="1"/>
</dbReference>